<comment type="function">
    <text evidence="1">Structure-specific nuclease with 5'-flap endonuclease and 5'-3' exonuclease activities involved in DNA replication and repair. During DNA replication, cleaves the 5'-overhanging flap structure that is generated by displacement synthesis when DNA polymerase encounters the 5'-end of a downstream Okazaki fragment. It enters the flap from the 5'-end and then tracks to cleave the flap base, leaving a nick for ligation. Also involved in the long patch base excision repair (LP-BER) pathway, by cleaving within the apurinic/apyrimidinic (AP) site-terminated flap. Acts as a genome stabilization factor that prevents flaps from equilibrating into structures that lead to duplications and deletions. Also possesses 5'-3' exonuclease activity on nicked or gapped double-stranded DNA, and exhibits RNase H activity. Also involved in replication and repair of rDNA and in repairing mitochondrial DNA.</text>
</comment>
<comment type="cofactor">
    <cofactor evidence="1">
        <name>Mg(2+)</name>
        <dbReference type="ChEBI" id="CHEBI:18420"/>
    </cofactor>
    <text evidence="1">Binds 2 magnesium ions per subunit. They probably participate in the reaction catalyzed by the enzyme. May bind an additional third magnesium ion after substrate binding.</text>
</comment>
<comment type="subunit">
    <text evidence="1">Interacts with PCNA. Three molecules of fen1 bind to one PCNA trimer with each molecule binding to one PCNA monomer. PCNA stimulates the nuclease activity without altering cleavage specificity.</text>
</comment>
<comment type="subcellular location">
    <subcellularLocation>
        <location evidence="1">Nucleus</location>
        <location evidence="1">Nucleolus</location>
    </subcellularLocation>
    <subcellularLocation>
        <location evidence="1">Nucleus</location>
        <location evidence="1">Nucleoplasm</location>
    </subcellularLocation>
    <subcellularLocation>
        <location evidence="1">Mitochondrion</location>
    </subcellularLocation>
    <text evidence="1">Resides mostly in the nucleoli and relocalizes to the nucleoplasm upon DNA damage.</text>
</comment>
<comment type="PTM">
    <text evidence="1">Phosphorylated. Phosphorylation upon DNA damage induces relocalization to the nuclear plasma.</text>
</comment>
<comment type="similarity">
    <text evidence="1">Belongs to the XPG/RAD2 endonuclease family. FEN1 subfamily.</text>
</comment>
<comment type="sequence caution" evidence="3">
    <conflict type="erroneous gene model prediction">
        <sequence resource="EMBL-CDS" id="EAL92962"/>
    </conflict>
</comment>
<accession>Q4WWJ1</accession>
<gene>
    <name type="primary">fen1</name>
    <name type="ORF">AFUA_3G06060</name>
</gene>
<sequence length="395" mass="44796">MGIKHLFQVIQENAPDAIKAGDIKNHFGRKVAIDASMSIYSFLIAVRSEGQQLMSESGETTSHLMGMFYRTLRMVDNGIKPLYVFDGAPPKLKSGELAKRTARKAEATEAHEEAKETGTAEDVEKFSRRTVRVTREHNAECKKLLKLMGIPYIDAPTEAEAQCAVLARAGKVYAAASEDMDTLCFEAPILLRHLTFSEQRKEPIQEIHLNRALEGLGMDRKQFIDLCILLGCDYLEPIPKVGPNTALKLIREHGSLEKVVEAIENDPKKKYVIPEYWPYQDARELFLHPDVREADHPECDFKWEAPDVEALVEFLVKDKGFNEDRVRNGATRLQKNLKTAQQSRLEGFFKPVARTDEEKASLKRKHDEKLQEQKKRKKEEAKAKKEAKAKPRGAA</sequence>
<proteinExistence type="inferred from homology"/>
<feature type="chain" id="PRO_0000403562" description="Flap endonuclease 1">
    <location>
        <begin position="1"/>
        <end position="395"/>
    </location>
</feature>
<feature type="region of interest" description="N-domain">
    <location>
        <begin position="1"/>
        <end position="104"/>
    </location>
</feature>
<feature type="region of interest" description="Disordered" evidence="2">
    <location>
        <begin position="102"/>
        <end position="121"/>
    </location>
</feature>
<feature type="region of interest" description="I-domain">
    <location>
        <begin position="122"/>
        <end position="253"/>
    </location>
</feature>
<feature type="region of interest" description="Interaction with PCNA" evidence="1">
    <location>
        <begin position="341"/>
        <end position="349"/>
    </location>
</feature>
<feature type="region of interest" description="Disordered" evidence="2">
    <location>
        <begin position="348"/>
        <end position="395"/>
    </location>
</feature>
<feature type="compositionally biased region" description="Basic and acidic residues" evidence="2">
    <location>
        <begin position="353"/>
        <end position="389"/>
    </location>
</feature>
<feature type="binding site" evidence="1">
    <location>
        <position position="34"/>
    </location>
    <ligand>
        <name>Mg(2+)</name>
        <dbReference type="ChEBI" id="CHEBI:18420"/>
        <label>1</label>
    </ligand>
</feature>
<feature type="binding site" evidence="1">
    <location>
        <position position="47"/>
    </location>
    <ligand>
        <name>DNA</name>
        <dbReference type="ChEBI" id="CHEBI:16991"/>
    </ligand>
</feature>
<feature type="binding site" evidence="1">
    <location>
        <position position="70"/>
    </location>
    <ligand>
        <name>DNA</name>
        <dbReference type="ChEBI" id="CHEBI:16991"/>
    </ligand>
</feature>
<feature type="binding site" evidence="1">
    <location>
        <position position="86"/>
    </location>
    <ligand>
        <name>Mg(2+)</name>
        <dbReference type="ChEBI" id="CHEBI:18420"/>
        <label>1</label>
    </ligand>
</feature>
<feature type="binding site" evidence="1">
    <location>
        <position position="158"/>
    </location>
    <ligand>
        <name>DNA</name>
        <dbReference type="ChEBI" id="CHEBI:16991"/>
    </ligand>
</feature>
<feature type="binding site" evidence="1">
    <location>
        <position position="158"/>
    </location>
    <ligand>
        <name>Mg(2+)</name>
        <dbReference type="ChEBI" id="CHEBI:18420"/>
        <label>1</label>
    </ligand>
</feature>
<feature type="binding site" evidence="1">
    <location>
        <position position="160"/>
    </location>
    <ligand>
        <name>Mg(2+)</name>
        <dbReference type="ChEBI" id="CHEBI:18420"/>
        <label>1</label>
    </ligand>
</feature>
<feature type="binding site" evidence="1">
    <location>
        <position position="179"/>
    </location>
    <ligand>
        <name>Mg(2+)</name>
        <dbReference type="ChEBI" id="CHEBI:18420"/>
        <label>2</label>
    </ligand>
</feature>
<feature type="binding site" evidence="1">
    <location>
        <position position="181"/>
    </location>
    <ligand>
        <name>Mg(2+)</name>
        <dbReference type="ChEBI" id="CHEBI:18420"/>
        <label>2</label>
    </ligand>
</feature>
<feature type="binding site" evidence="1">
    <location>
        <position position="231"/>
    </location>
    <ligand>
        <name>DNA</name>
        <dbReference type="ChEBI" id="CHEBI:16991"/>
    </ligand>
</feature>
<feature type="binding site" evidence="1">
    <location>
        <position position="233"/>
    </location>
    <ligand>
        <name>DNA</name>
        <dbReference type="ChEBI" id="CHEBI:16991"/>
    </ligand>
</feature>
<feature type="binding site" evidence="1">
    <location>
        <position position="233"/>
    </location>
    <ligand>
        <name>Mg(2+)</name>
        <dbReference type="ChEBI" id="CHEBI:18420"/>
        <label>2</label>
    </ligand>
</feature>
<keyword id="KW-0227">DNA damage</keyword>
<keyword id="KW-0234">DNA repair</keyword>
<keyword id="KW-0235">DNA replication</keyword>
<keyword id="KW-0255">Endonuclease</keyword>
<keyword id="KW-0269">Exonuclease</keyword>
<keyword id="KW-0378">Hydrolase</keyword>
<keyword id="KW-0460">Magnesium</keyword>
<keyword id="KW-0479">Metal-binding</keyword>
<keyword id="KW-0496">Mitochondrion</keyword>
<keyword id="KW-0540">Nuclease</keyword>
<keyword id="KW-0539">Nucleus</keyword>
<keyword id="KW-0597">Phosphoprotein</keyword>
<keyword id="KW-1185">Reference proteome</keyword>
<evidence type="ECO:0000255" key="1">
    <source>
        <dbReference type="HAMAP-Rule" id="MF_03140"/>
    </source>
</evidence>
<evidence type="ECO:0000256" key="2">
    <source>
        <dbReference type="SAM" id="MobiDB-lite"/>
    </source>
</evidence>
<evidence type="ECO:0000305" key="3"/>
<dbReference type="EC" id="3.1.-.-" evidence="1"/>
<dbReference type="EMBL" id="AAHF01000002">
    <property type="protein sequence ID" value="EAL92962.1"/>
    <property type="status" value="ALT_SEQ"/>
    <property type="molecule type" value="Genomic_DNA"/>
</dbReference>
<dbReference type="RefSeq" id="XP_755000.1">
    <property type="nucleotide sequence ID" value="XM_749907.1"/>
</dbReference>
<dbReference type="SMR" id="Q4WWJ1"/>
<dbReference type="FunCoup" id="Q4WWJ1">
    <property type="interactions" value="1042"/>
</dbReference>
<dbReference type="STRING" id="330879.Q4WWJ1"/>
<dbReference type="GeneID" id="3512410"/>
<dbReference type="KEGG" id="afm:AFUA_3G06060"/>
<dbReference type="VEuPathDB" id="FungiDB:Afu3g06060"/>
<dbReference type="eggNOG" id="KOG2519">
    <property type="taxonomic scope" value="Eukaryota"/>
</dbReference>
<dbReference type="HOGENOM" id="CLU_032444_2_0_1"/>
<dbReference type="InParanoid" id="Q4WWJ1"/>
<dbReference type="OrthoDB" id="1937206at2759"/>
<dbReference type="Proteomes" id="UP000002530">
    <property type="component" value="Chromosome 3"/>
</dbReference>
<dbReference type="GO" id="GO:0005737">
    <property type="term" value="C:cytoplasm"/>
    <property type="evidence" value="ECO:0000318"/>
    <property type="project" value="GO_Central"/>
</dbReference>
<dbReference type="GO" id="GO:0005739">
    <property type="term" value="C:mitochondrion"/>
    <property type="evidence" value="ECO:0007669"/>
    <property type="project" value="UniProtKB-SubCell"/>
</dbReference>
<dbReference type="GO" id="GO:0005730">
    <property type="term" value="C:nucleolus"/>
    <property type="evidence" value="ECO:0007669"/>
    <property type="project" value="UniProtKB-SubCell"/>
</dbReference>
<dbReference type="GO" id="GO:0005654">
    <property type="term" value="C:nucleoplasm"/>
    <property type="evidence" value="ECO:0007669"/>
    <property type="project" value="UniProtKB-SubCell"/>
</dbReference>
<dbReference type="GO" id="GO:0005634">
    <property type="term" value="C:nucleus"/>
    <property type="evidence" value="ECO:0000318"/>
    <property type="project" value="GO_Central"/>
</dbReference>
<dbReference type="GO" id="GO:0008409">
    <property type="term" value="F:5'-3' exonuclease activity"/>
    <property type="evidence" value="ECO:0000318"/>
    <property type="project" value="GO_Central"/>
</dbReference>
<dbReference type="GO" id="GO:0017108">
    <property type="term" value="F:5'-flap endonuclease activity"/>
    <property type="evidence" value="ECO:0000318"/>
    <property type="project" value="GO_Central"/>
</dbReference>
<dbReference type="GO" id="GO:0003677">
    <property type="term" value="F:DNA binding"/>
    <property type="evidence" value="ECO:0007669"/>
    <property type="project" value="UniProtKB-UniRule"/>
</dbReference>
<dbReference type="GO" id="GO:0000287">
    <property type="term" value="F:magnesium ion binding"/>
    <property type="evidence" value="ECO:0007669"/>
    <property type="project" value="UniProtKB-UniRule"/>
</dbReference>
<dbReference type="GO" id="GO:0006284">
    <property type="term" value="P:base-excision repair"/>
    <property type="evidence" value="ECO:0007669"/>
    <property type="project" value="UniProtKB-UniRule"/>
</dbReference>
<dbReference type="GO" id="GO:0043137">
    <property type="term" value="P:DNA replication, removal of RNA primer"/>
    <property type="evidence" value="ECO:0007669"/>
    <property type="project" value="UniProtKB-UniRule"/>
</dbReference>
<dbReference type="CDD" id="cd09907">
    <property type="entry name" value="H3TH_FEN1-Euk"/>
    <property type="match status" value="1"/>
</dbReference>
<dbReference type="CDD" id="cd09867">
    <property type="entry name" value="PIN_FEN1"/>
    <property type="match status" value="1"/>
</dbReference>
<dbReference type="FunFam" id="1.10.150.20:FF:000009">
    <property type="entry name" value="Flap endonuclease 1"/>
    <property type="match status" value="1"/>
</dbReference>
<dbReference type="FunFam" id="3.40.50.1010:FF:000003">
    <property type="entry name" value="Flap endonuclease 1"/>
    <property type="match status" value="1"/>
</dbReference>
<dbReference type="Gene3D" id="1.10.150.20">
    <property type="entry name" value="5' to 3' exonuclease, C-terminal subdomain"/>
    <property type="match status" value="1"/>
</dbReference>
<dbReference type="Gene3D" id="3.40.50.1010">
    <property type="entry name" value="5'-nuclease"/>
    <property type="match status" value="1"/>
</dbReference>
<dbReference type="HAMAP" id="MF_00614">
    <property type="entry name" value="Fen"/>
    <property type="match status" value="1"/>
</dbReference>
<dbReference type="InterPro" id="IPR036279">
    <property type="entry name" value="5-3_exonuclease_C_sf"/>
</dbReference>
<dbReference type="InterPro" id="IPR023426">
    <property type="entry name" value="Flap_endonuc"/>
</dbReference>
<dbReference type="InterPro" id="IPR008918">
    <property type="entry name" value="HhH2"/>
</dbReference>
<dbReference type="InterPro" id="IPR029060">
    <property type="entry name" value="PIN-like_dom_sf"/>
</dbReference>
<dbReference type="InterPro" id="IPR006086">
    <property type="entry name" value="XPG-I_dom"/>
</dbReference>
<dbReference type="InterPro" id="IPR006084">
    <property type="entry name" value="XPG/Rad2"/>
</dbReference>
<dbReference type="InterPro" id="IPR019974">
    <property type="entry name" value="XPG_CS"/>
</dbReference>
<dbReference type="InterPro" id="IPR006085">
    <property type="entry name" value="XPG_DNA_repair_N"/>
</dbReference>
<dbReference type="PANTHER" id="PTHR11081:SF9">
    <property type="entry name" value="FLAP ENDONUCLEASE 1"/>
    <property type="match status" value="1"/>
</dbReference>
<dbReference type="PANTHER" id="PTHR11081">
    <property type="entry name" value="FLAP ENDONUCLEASE FAMILY MEMBER"/>
    <property type="match status" value="1"/>
</dbReference>
<dbReference type="Pfam" id="PF00867">
    <property type="entry name" value="XPG_I"/>
    <property type="match status" value="1"/>
</dbReference>
<dbReference type="Pfam" id="PF00752">
    <property type="entry name" value="XPG_N"/>
    <property type="match status" value="1"/>
</dbReference>
<dbReference type="PRINTS" id="PR00853">
    <property type="entry name" value="XPGRADSUPER"/>
</dbReference>
<dbReference type="SMART" id="SM00279">
    <property type="entry name" value="HhH2"/>
    <property type="match status" value="1"/>
</dbReference>
<dbReference type="SMART" id="SM00484">
    <property type="entry name" value="XPGI"/>
    <property type="match status" value="1"/>
</dbReference>
<dbReference type="SMART" id="SM00485">
    <property type="entry name" value="XPGN"/>
    <property type="match status" value="1"/>
</dbReference>
<dbReference type="SUPFAM" id="SSF47807">
    <property type="entry name" value="5' to 3' exonuclease, C-terminal subdomain"/>
    <property type="match status" value="1"/>
</dbReference>
<dbReference type="SUPFAM" id="SSF88723">
    <property type="entry name" value="PIN domain-like"/>
    <property type="match status" value="1"/>
</dbReference>
<dbReference type="PROSITE" id="PS00841">
    <property type="entry name" value="XPG_1"/>
    <property type="match status" value="1"/>
</dbReference>
<dbReference type="PROSITE" id="PS00842">
    <property type="entry name" value="XPG_2"/>
    <property type="match status" value="1"/>
</dbReference>
<organism>
    <name type="scientific">Aspergillus fumigatus (strain ATCC MYA-4609 / CBS 101355 / FGSC A1100 / Af293)</name>
    <name type="common">Neosartorya fumigata</name>
    <dbReference type="NCBI Taxonomy" id="330879"/>
    <lineage>
        <taxon>Eukaryota</taxon>
        <taxon>Fungi</taxon>
        <taxon>Dikarya</taxon>
        <taxon>Ascomycota</taxon>
        <taxon>Pezizomycotina</taxon>
        <taxon>Eurotiomycetes</taxon>
        <taxon>Eurotiomycetidae</taxon>
        <taxon>Eurotiales</taxon>
        <taxon>Aspergillaceae</taxon>
        <taxon>Aspergillus</taxon>
        <taxon>Aspergillus subgen. Fumigati</taxon>
    </lineage>
</organism>
<protein>
    <recommendedName>
        <fullName evidence="1">Flap endonuclease 1</fullName>
        <shortName evidence="1">FEN-1</shortName>
        <ecNumber evidence="1">3.1.-.-</ecNumber>
    </recommendedName>
    <alternativeName>
        <fullName evidence="1">Flap structure-specific endonuclease 1</fullName>
    </alternativeName>
</protein>
<name>FEN1_ASPFU</name>
<reference key="1">
    <citation type="journal article" date="2005" name="Nature">
        <title>Genomic sequence of the pathogenic and allergenic filamentous fungus Aspergillus fumigatus.</title>
        <authorList>
            <person name="Nierman W.C."/>
            <person name="Pain A."/>
            <person name="Anderson M.J."/>
            <person name="Wortman J.R."/>
            <person name="Kim H.S."/>
            <person name="Arroyo J."/>
            <person name="Berriman M."/>
            <person name="Abe K."/>
            <person name="Archer D.B."/>
            <person name="Bermejo C."/>
            <person name="Bennett J.W."/>
            <person name="Bowyer P."/>
            <person name="Chen D."/>
            <person name="Collins M."/>
            <person name="Coulsen R."/>
            <person name="Davies R."/>
            <person name="Dyer P.S."/>
            <person name="Farman M.L."/>
            <person name="Fedorova N."/>
            <person name="Fedorova N.D."/>
            <person name="Feldblyum T.V."/>
            <person name="Fischer R."/>
            <person name="Fosker N."/>
            <person name="Fraser A."/>
            <person name="Garcia J.L."/>
            <person name="Garcia M.J."/>
            <person name="Goble A."/>
            <person name="Goldman G.H."/>
            <person name="Gomi K."/>
            <person name="Griffith-Jones S."/>
            <person name="Gwilliam R."/>
            <person name="Haas B.J."/>
            <person name="Haas H."/>
            <person name="Harris D.E."/>
            <person name="Horiuchi H."/>
            <person name="Huang J."/>
            <person name="Humphray S."/>
            <person name="Jimenez J."/>
            <person name="Keller N."/>
            <person name="Khouri H."/>
            <person name="Kitamoto K."/>
            <person name="Kobayashi T."/>
            <person name="Konzack S."/>
            <person name="Kulkarni R."/>
            <person name="Kumagai T."/>
            <person name="Lafton A."/>
            <person name="Latge J.-P."/>
            <person name="Li W."/>
            <person name="Lord A."/>
            <person name="Lu C."/>
            <person name="Majoros W.H."/>
            <person name="May G.S."/>
            <person name="Miller B.L."/>
            <person name="Mohamoud Y."/>
            <person name="Molina M."/>
            <person name="Monod M."/>
            <person name="Mouyna I."/>
            <person name="Mulligan S."/>
            <person name="Murphy L.D."/>
            <person name="O'Neil S."/>
            <person name="Paulsen I."/>
            <person name="Penalva M.A."/>
            <person name="Pertea M."/>
            <person name="Price C."/>
            <person name="Pritchard B.L."/>
            <person name="Quail M.A."/>
            <person name="Rabbinowitsch E."/>
            <person name="Rawlins N."/>
            <person name="Rajandream M.A."/>
            <person name="Reichard U."/>
            <person name="Renauld H."/>
            <person name="Robson G.D."/>
            <person name="Rodriguez de Cordoba S."/>
            <person name="Rodriguez-Pena J.M."/>
            <person name="Ronning C.M."/>
            <person name="Rutter S."/>
            <person name="Salzberg S.L."/>
            <person name="Sanchez M."/>
            <person name="Sanchez-Ferrero J.C."/>
            <person name="Saunders D."/>
            <person name="Seeger K."/>
            <person name="Squares R."/>
            <person name="Squares S."/>
            <person name="Takeuchi M."/>
            <person name="Tekaia F."/>
            <person name="Turner G."/>
            <person name="Vazquez de Aldana C.R."/>
            <person name="Weidman J."/>
            <person name="White O."/>
            <person name="Woodward J.R."/>
            <person name="Yu J.-H."/>
            <person name="Fraser C.M."/>
            <person name="Galagan J.E."/>
            <person name="Asai K."/>
            <person name="Machida M."/>
            <person name="Hall N."/>
            <person name="Barrell B.G."/>
            <person name="Denning D.W."/>
        </authorList>
    </citation>
    <scope>NUCLEOTIDE SEQUENCE [LARGE SCALE GENOMIC DNA]</scope>
    <source>
        <strain>ATCC MYA-4609 / CBS 101355 / FGSC A1100 / Af293</strain>
    </source>
</reference>